<feature type="chain" id="PRO_1000049757" description="Large ribosomal subunit protein bL19">
    <location>
        <begin position="1"/>
        <end position="119"/>
    </location>
</feature>
<proteinExistence type="inferred from homology"/>
<organism>
    <name type="scientific">Sulfurovum sp. (strain NBC37-1)</name>
    <dbReference type="NCBI Taxonomy" id="387093"/>
    <lineage>
        <taxon>Bacteria</taxon>
        <taxon>Pseudomonadati</taxon>
        <taxon>Campylobacterota</taxon>
        <taxon>Epsilonproteobacteria</taxon>
        <taxon>Campylobacterales</taxon>
        <taxon>Sulfurovaceae</taxon>
        <taxon>Sulfurovum</taxon>
    </lineage>
</organism>
<comment type="function">
    <text evidence="1">This protein is located at the 30S-50S ribosomal subunit interface and may play a role in the structure and function of the aminoacyl-tRNA binding site.</text>
</comment>
<comment type="similarity">
    <text evidence="1">Belongs to the bacterial ribosomal protein bL19 family.</text>
</comment>
<name>RL19_SULNB</name>
<keyword id="KW-0687">Ribonucleoprotein</keyword>
<keyword id="KW-0689">Ribosomal protein</keyword>
<dbReference type="EMBL" id="AP009179">
    <property type="protein sequence ID" value="BAF71332.1"/>
    <property type="molecule type" value="Genomic_DNA"/>
</dbReference>
<dbReference type="RefSeq" id="WP_011980065.1">
    <property type="nucleotide sequence ID" value="NC_009663.1"/>
</dbReference>
<dbReference type="SMR" id="A6Q773"/>
<dbReference type="STRING" id="387093.SUN_0372"/>
<dbReference type="KEGG" id="sun:SUN_0372"/>
<dbReference type="eggNOG" id="COG0335">
    <property type="taxonomic scope" value="Bacteria"/>
</dbReference>
<dbReference type="HOGENOM" id="CLU_103507_2_2_7"/>
<dbReference type="OrthoDB" id="9803541at2"/>
<dbReference type="Proteomes" id="UP000006378">
    <property type="component" value="Chromosome"/>
</dbReference>
<dbReference type="GO" id="GO:0022625">
    <property type="term" value="C:cytosolic large ribosomal subunit"/>
    <property type="evidence" value="ECO:0007669"/>
    <property type="project" value="TreeGrafter"/>
</dbReference>
<dbReference type="GO" id="GO:0003735">
    <property type="term" value="F:structural constituent of ribosome"/>
    <property type="evidence" value="ECO:0007669"/>
    <property type="project" value="InterPro"/>
</dbReference>
<dbReference type="GO" id="GO:0006412">
    <property type="term" value="P:translation"/>
    <property type="evidence" value="ECO:0007669"/>
    <property type="project" value="UniProtKB-UniRule"/>
</dbReference>
<dbReference type="FunFam" id="2.30.30.790:FF:000001">
    <property type="entry name" value="50S ribosomal protein L19"/>
    <property type="match status" value="1"/>
</dbReference>
<dbReference type="Gene3D" id="2.30.30.790">
    <property type="match status" value="1"/>
</dbReference>
<dbReference type="HAMAP" id="MF_00402">
    <property type="entry name" value="Ribosomal_bL19"/>
    <property type="match status" value="1"/>
</dbReference>
<dbReference type="InterPro" id="IPR001857">
    <property type="entry name" value="Ribosomal_bL19"/>
</dbReference>
<dbReference type="InterPro" id="IPR018257">
    <property type="entry name" value="Ribosomal_bL19_CS"/>
</dbReference>
<dbReference type="InterPro" id="IPR038657">
    <property type="entry name" value="Ribosomal_bL19_sf"/>
</dbReference>
<dbReference type="InterPro" id="IPR008991">
    <property type="entry name" value="Translation_prot_SH3-like_sf"/>
</dbReference>
<dbReference type="NCBIfam" id="TIGR01024">
    <property type="entry name" value="rplS_bact"/>
    <property type="match status" value="1"/>
</dbReference>
<dbReference type="PANTHER" id="PTHR15680:SF9">
    <property type="entry name" value="LARGE RIBOSOMAL SUBUNIT PROTEIN BL19M"/>
    <property type="match status" value="1"/>
</dbReference>
<dbReference type="PANTHER" id="PTHR15680">
    <property type="entry name" value="RIBOSOMAL PROTEIN L19"/>
    <property type="match status" value="1"/>
</dbReference>
<dbReference type="Pfam" id="PF01245">
    <property type="entry name" value="Ribosomal_L19"/>
    <property type="match status" value="1"/>
</dbReference>
<dbReference type="PIRSF" id="PIRSF002191">
    <property type="entry name" value="Ribosomal_L19"/>
    <property type="match status" value="1"/>
</dbReference>
<dbReference type="PRINTS" id="PR00061">
    <property type="entry name" value="RIBOSOMALL19"/>
</dbReference>
<dbReference type="SUPFAM" id="SSF50104">
    <property type="entry name" value="Translation proteins SH3-like domain"/>
    <property type="match status" value="1"/>
</dbReference>
<dbReference type="PROSITE" id="PS01015">
    <property type="entry name" value="RIBOSOMAL_L19"/>
    <property type="match status" value="1"/>
</dbReference>
<reference key="1">
    <citation type="journal article" date="2007" name="Proc. Natl. Acad. Sci. U.S.A.">
        <title>Deep-sea vent epsilon-proteobacterial genomes provide insights into emergence of pathogens.</title>
        <authorList>
            <person name="Nakagawa S."/>
            <person name="Takaki Y."/>
            <person name="Shimamura S."/>
            <person name="Reysenbach A.-L."/>
            <person name="Takai K."/>
            <person name="Horikoshi K."/>
        </authorList>
    </citation>
    <scope>NUCLEOTIDE SEQUENCE [LARGE SCALE GENOMIC DNA]</scope>
    <source>
        <strain>NBC37-1</strain>
    </source>
</reference>
<accession>A6Q773</accession>
<protein>
    <recommendedName>
        <fullName evidence="1">Large ribosomal subunit protein bL19</fullName>
    </recommendedName>
    <alternativeName>
        <fullName evidence="2">50S ribosomal protein L19</fullName>
    </alternativeName>
</protein>
<evidence type="ECO:0000255" key="1">
    <source>
        <dbReference type="HAMAP-Rule" id="MF_00402"/>
    </source>
</evidence>
<evidence type="ECO:0000305" key="2"/>
<sequence>MRNKYIESFEKAQLENRNIPEFRAGDTVKVAVRIKEGSKERVQNYEGLCIAIRGQGTGRTFMVRKMGANSVGVERIFPLYSDSIESIEVLRKGRVRRAKLFYLRELKGKAARIKELRRK</sequence>
<gene>
    <name evidence="1" type="primary">rplS</name>
    <name type="ordered locus">SUN_0372</name>
</gene>